<evidence type="ECO:0000255" key="1">
    <source>
        <dbReference type="HAMAP-Rule" id="MF_00412"/>
    </source>
</evidence>
<name>PROA_SHIFL</name>
<keyword id="KW-0028">Amino-acid biosynthesis</keyword>
<keyword id="KW-0963">Cytoplasm</keyword>
<keyword id="KW-0521">NADP</keyword>
<keyword id="KW-0560">Oxidoreductase</keyword>
<keyword id="KW-0641">Proline biosynthesis</keyword>
<keyword id="KW-1185">Reference proteome</keyword>
<sequence length="417" mass="44632">MLEQMGIAAKQASYKLAQLSSREKNRVLEKIADELEAQSEIILNANAQDVADARANGLSEAMLDRLALTPARLKGIADDVRQVCNLADPVGQVIDGGVLDSGLRLERRRVPLGVIGVIYEARPNVTVDVASLCLKTGNAVILRGGKETCRTNAATVAVIQDALKSCGLPAGAVQAIDNPDRALVSEMLRMDKYIDMLIPRGGAGLHKLCREQSTIPVITGGIGVCHIYVDESAEIAEALKVIVNAKTQRPSTCNTVETLLVNKNIADSFLPALSKQMAESGVTLHADAAALTQLQAGPAKVVAVKAEEYDDEFLSLDLNVKIVSDLDDAIAHIREHGTQHSDAILTRDMRNAQRFVNEVDSSAVYVNASTRFTDGGQFGLGAEVAVSTQKLHARGPMGLEALTTYKWIGIGDYTIRA</sequence>
<accession>Q83SH9</accession>
<reference key="1">
    <citation type="journal article" date="2002" name="Nucleic Acids Res.">
        <title>Genome sequence of Shigella flexneri 2a: insights into pathogenicity through comparison with genomes of Escherichia coli K12 and O157.</title>
        <authorList>
            <person name="Jin Q."/>
            <person name="Yuan Z."/>
            <person name="Xu J."/>
            <person name="Wang Y."/>
            <person name="Shen Y."/>
            <person name="Lu W."/>
            <person name="Wang J."/>
            <person name="Liu H."/>
            <person name="Yang J."/>
            <person name="Yang F."/>
            <person name="Zhang X."/>
            <person name="Zhang J."/>
            <person name="Yang G."/>
            <person name="Wu H."/>
            <person name="Qu D."/>
            <person name="Dong J."/>
            <person name="Sun L."/>
            <person name="Xue Y."/>
            <person name="Zhao A."/>
            <person name="Gao Y."/>
            <person name="Zhu J."/>
            <person name="Kan B."/>
            <person name="Ding K."/>
            <person name="Chen S."/>
            <person name="Cheng H."/>
            <person name="Yao Z."/>
            <person name="He B."/>
            <person name="Chen R."/>
            <person name="Ma D."/>
            <person name="Qiang B."/>
            <person name="Wen Y."/>
            <person name="Hou Y."/>
            <person name="Yu J."/>
        </authorList>
    </citation>
    <scope>NUCLEOTIDE SEQUENCE [LARGE SCALE GENOMIC DNA]</scope>
    <source>
        <strain>301 / Serotype 2a</strain>
    </source>
</reference>
<reference key="2">
    <citation type="journal article" date="2003" name="Infect. Immun.">
        <title>Complete genome sequence and comparative genomics of Shigella flexneri serotype 2a strain 2457T.</title>
        <authorList>
            <person name="Wei J."/>
            <person name="Goldberg M.B."/>
            <person name="Burland V."/>
            <person name="Venkatesan M.M."/>
            <person name="Deng W."/>
            <person name="Fournier G."/>
            <person name="Mayhew G.F."/>
            <person name="Plunkett G. III"/>
            <person name="Rose D.J."/>
            <person name="Darling A."/>
            <person name="Mau B."/>
            <person name="Perna N.T."/>
            <person name="Payne S.M."/>
            <person name="Runyen-Janecky L.J."/>
            <person name="Zhou S."/>
            <person name="Schwartz D.C."/>
            <person name="Blattner F.R."/>
        </authorList>
    </citation>
    <scope>NUCLEOTIDE SEQUENCE [LARGE SCALE GENOMIC DNA]</scope>
    <source>
        <strain>ATCC 700930 / 2457T / Serotype 2a</strain>
    </source>
</reference>
<organism>
    <name type="scientific">Shigella flexneri</name>
    <dbReference type="NCBI Taxonomy" id="623"/>
    <lineage>
        <taxon>Bacteria</taxon>
        <taxon>Pseudomonadati</taxon>
        <taxon>Pseudomonadota</taxon>
        <taxon>Gammaproteobacteria</taxon>
        <taxon>Enterobacterales</taxon>
        <taxon>Enterobacteriaceae</taxon>
        <taxon>Shigella</taxon>
    </lineage>
</organism>
<proteinExistence type="inferred from homology"/>
<protein>
    <recommendedName>
        <fullName evidence="1">Gamma-glutamyl phosphate reductase</fullName>
        <shortName evidence="1">GPR</shortName>
        <ecNumber evidence="1">1.2.1.41</ecNumber>
    </recommendedName>
    <alternativeName>
        <fullName evidence="1">Glutamate-5-semialdehyde dehydrogenase</fullName>
    </alternativeName>
    <alternativeName>
        <fullName evidence="1">Glutamyl-gamma-semialdehyde dehydrogenase</fullName>
        <shortName evidence="1">GSA dehydrogenase</shortName>
    </alternativeName>
</protein>
<comment type="function">
    <text evidence="1">Catalyzes the NADPH-dependent reduction of L-glutamate 5-phosphate into L-glutamate 5-semialdehyde and phosphate. The product spontaneously undergoes cyclization to form 1-pyrroline-5-carboxylate.</text>
</comment>
<comment type="catalytic activity">
    <reaction evidence="1">
        <text>L-glutamate 5-semialdehyde + phosphate + NADP(+) = L-glutamyl 5-phosphate + NADPH + H(+)</text>
        <dbReference type="Rhea" id="RHEA:19541"/>
        <dbReference type="ChEBI" id="CHEBI:15378"/>
        <dbReference type="ChEBI" id="CHEBI:43474"/>
        <dbReference type="ChEBI" id="CHEBI:57783"/>
        <dbReference type="ChEBI" id="CHEBI:58066"/>
        <dbReference type="ChEBI" id="CHEBI:58274"/>
        <dbReference type="ChEBI" id="CHEBI:58349"/>
        <dbReference type="EC" id="1.2.1.41"/>
    </reaction>
</comment>
<comment type="pathway">
    <text evidence="1">Amino-acid biosynthesis; L-proline biosynthesis; L-glutamate 5-semialdehyde from L-glutamate: step 2/2.</text>
</comment>
<comment type="subcellular location">
    <subcellularLocation>
        <location evidence="1">Cytoplasm</location>
    </subcellularLocation>
</comment>
<comment type="similarity">
    <text evidence="1">Belongs to the gamma-glutamyl phosphate reductase family.</text>
</comment>
<dbReference type="EC" id="1.2.1.41" evidence="1"/>
<dbReference type="EMBL" id="AE005674">
    <property type="protein sequence ID" value="AAN41952.1"/>
    <property type="molecule type" value="Genomic_DNA"/>
</dbReference>
<dbReference type="EMBL" id="AE014073">
    <property type="protein sequence ID" value="AAP15839.1"/>
    <property type="molecule type" value="Genomic_DNA"/>
</dbReference>
<dbReference type="RefSeq" id="NP_706245.1">
    <property type="nucleotide sequence ID" value="NC_004337.2"/>
</dbReference>
<dbReference type="RefSeq" id="WP_000893267.1">
    <property type="nucleotide sequence ID" value="NZ_WPGW01000055.1"/>
</dbReference>
<dbReference type="SMR" id="Q83SH9"/>
<dbReference type="STRING" id="198214.SF0293"/>
<dbReference type="PaxDb" id="198214-SF0293"/>
<dbReference type="GeneID" id="1024291"/>
<dbReference type="KEGG" id="sfl:SF0293"/>
<dbReference type="KEGG" id="sfx:S0314"/>
<dbReference type="PATRIC" id="fig|198214.7.peg.335"/>
<dbReference type="HOGENOM" id="CLU_030231_0_0_6"/>
<dbReference type="UniPathway" id="UPA00098">
    <property type="reaction ID" value="UER00360"/>
</dbReference>
<dbReference type="Proteomes" id="UP000001006">
    <property type="component" value="Chromosome"/>
</dbReference>
<dbReference type="Proteomes" id="UP000002673">
    <property type="component" value="Chromosome"/>
</dbReference>
<dbReference type="GO" id="GO:0005737">
    <property type="term" value="C:cytoplasm"/>
    <property type="evidence" value="ECO:0007669"/>
    <property type="project" value="UniProtKB-SubCell"/>
</dbReference>
<dbReference type="GO" id="GO:0004350">
    <property type="term" value="F:glutamate-5-semialdehyde dehydrogenase activity"/>
    <property type="evidence" value="ECO:0007669"/>
    <property type="project" value="UniProtKB-UniRule"/>
</dbReference>
<dbReference type="GO" id="GO:0050661">
    <property type="term" value="F:NADP binding"/>
    <property type="evidence" value="ECO:0007669"/>
    <property type="project" value="InterPro"/>
</dbReference>
<dbReference type="GO" id="GO:0055129">
    <property type="term" value="P:L-proline biosynthetic process"/>
    <property type="evidence" value="ECO:0007669"/>
    <property type="project" value="UniProtKB-UniRule"/>
</dbReference>
<dbReference type="CDD" id="cd07079">
    <property type="entry name" value="ALDH_F18-19_ProA-GPR"/>
    <property type="match status" value="1"/>
</dbReference>
<dbReference type="FunFam" id="3.40.309.10:FF:000006">
    <property type="entry name" value="Gamma-glutamyl phosphate reductase"/>
    <property type="match status" value="1"/>
</dbReference>
<dbReference type="Gene3D" id="3.40.605.10">
    <property type="entry name" value="Aldehyde Dehydrogenase, Chain A, domain 1"/>
    <property type="match status" value="1"/>
</dbReference>
<dbReference type="Gene3D" id="3.40.309.10">
    <property type="entry name" value="Aldehyde Dehydrogenase, Chain A, domain 2"/>
    <property type="match status" value="1"/>
</dbReference>
<dbReference type="HAMAP" id="MF_00412">
    <property type="entry name" value="ProA"/>
    <property type="match status" value="1"/>
</dbReference>
<dbReference type="InterPro" id="IPR016161">
    <property type="entry name" value="Ald_DH/histidinol_DH"/>
</dbReference>
<dbReference type="InterPro" id="IPR016163">
    <property type="entry name" value="Ald_DH_C"/>
</dbReference>
<dbReference type="InterPro" id="IPR016162">
    <property type="entry name" value="Ald_DH_N"/>
</dbReference>
<dbReference type="InterPro" id="IPR015590">
    <property type="entry name" value="Aldehyde_DH_dom"/>
</dbReference>
<dbReference type="InterPro" id="IPR020593">
    <property type="entry name" value="G-glutamylP_reductase_CS"/>
</dbReference>
<dbReference type="InterPro" id="IPR012134">
    <property type="entry name" value="Glu-5-SA_DH"/>
</dbReference>
<dbReference type="InterPro" id="IPR000965">
    <property type="entry name" value="GPR_dom"/>
</dbReference>
<dbReference type="NCBIfam" id="NF001221">
    <property type="entry name" value="PRK00197.1"/>
    <property type="match status" value="1"/>
</dbReference>
<dbReference type="NCBIfam" id="TIGR00407">
    <property type="entry name" value="proA"/>
    <property type="match status" value="1"/>
</dbReference>
<dbReference type="PANTHER" id="PTHR11063:SF8">
    <property type="entry name" value="DELTA-1-PYRROLINE-5-CARBOXYLATE SYNTHASE"/>
    <property type="match status" value="1"/>
</dbReference>
<dbReference type="PANTHER" id="PTHR11063">
    <property type="entry name" value="GLUTAMATE SEMIALDEHYDE DEHYDROGENASE"/>
    <property type="match status" value="1"/>
</dbReference>
<dbReference type="Pfam" id="PF00171">
    <property type="entry name" value="Aldedh"/>
    <property type="match status" value="1"/>
</dbReference>
<dbReference type="PIRSF" id="PIRSF000151">
    <property type="entry name" value="GPR"/>
    <property type="match status" value="1"/>
</dbReference>
<dbReference type="SUPFAM" id="SSF53720">
    <property type="entry name" value="ALDH-like"/>
    <property type="match status" value="1"/>
</dbReference>
<dbReference type="PROSITE" id="PS01223">
    <property type="entry name" value="PROA"/>
    <property type="match status" value="1"/>
</dbReference>
<gene>
    <name evidence="1" type="primary">proA</name>
    <name type="ordered locus">SF0293</name>
    <name type="ordered locus">S0314</name>
</gene>
<feature type="chain" id="PRO_0000189781" description="Gamma-glutamyl phosphate reductase">
    <location>
        <begin position="1"/>
        <end position="417"/>
    </location>
</feature>